<keyword id="KW-1185">Reference proteome</keyword>
<keyword id="KW-0687">Ribonucleoprotein</keyword>
<keyword id="KW-0689">Ribosomal protein</keyword>
<keyword id="KW-0694">RNA-binding</keyword>
<keyword id="KW-0699">rRNA-binding</keyword>
<evidence type="ECO:0000255" key="1">
    <source>
        <dbReference type="HAMAP-Rule" id="MF_01307"/>
    </source>
</evidence>
<evidence type="ECO:0000305" key="2"/>
<dbReference type="EMBL" id="CP001154">
    <property type="protein sequence ID" value="ACO73265.1"/>
    <property type="molecule type" value="Genomic_DNA"/>
</dbReference>
<dbReference type="RefSeq" id="WP_012695759.1">
    <property type="nucleotide sequence ID" value="NC_012559.1"/>
</dbReference>
<dbReference type="SMR" id="C1DAT4"/>
<dbReference type="STRING" id="557598.LHK_00270"/>
<dbReference type="GeneID" id="75109490"/>
<dbReference type="KEGG" id="lhk:LHK_00270"/>
<dbReference type="eggNOG" id="COG0098">
    <property type="taxonomic scope" value="Bacteria"/>
</dbReference>
<dbReference type="HOGENOM" id="CLU_065898_2_2_4"/>
<dbReference type="Proteomes" id="UP000002010">
    <property type="component" value="Chromosome"/>
</dbReference>
<dbReference type="GO" id="GO:0015935">
    <property type="term" value="C:small ribosomal subunit"/>
    <property type="evidence" value="ECO:0007669"/>
    <property type="project" value="InterPro"/>
</dbReference>
<dbReference type="GO" id="GO:0019843">
    <property type="term" value="F:rRNA binding"/>
    <property type="evidence" value="ECO:0007669"/>
    <property type="project" value="UniProtKB-UniRule"/>
</dbReference>
<dbReference type="GO" id="GO:0003735">
    <property type="term" value="F:structural constituent of ribosome"/>
    <property type="evidence" value="ECO:0007669"/>
    <property type="project" value="InterPro"/>
</dbReference>
<dbReference type="GO" id="GO:0006412">
    <property type="term" value="P:translation"/>
    <property type="evidence" value="ECO:0007669"/>
    <property type="project" value="UniProtKB-UniRule"/>
</dbReference>
<dbReference type="FunFam" id="3.30.160.20:FF:000001">
    <property type="entry name" value="30S ribosomal protein S5"/>
    <property type="match status" value="1"/>
</dbReference>
<dbReference type="FunFam" id="3.30.230.10:FF:000002">
    <property type="entry name" value="30S ribosomal protein S5"/>
    <property type="match status" value="1"/>
</dbReference>
<dbReference type="Gene3D" id="3.30.160.20">
    <property type="match status" value="1"/>
</dbReference>
<dbReference type="Gene3D" id="3.30.230.10">
    <property type="match status" value="1"/>
</dbReference>
<dbReference type="HAMAP" id="MF_01307_B">
    <property type="entry name" value="Ribosomal_uS5_B"/>
    <property type="match status" value="1"/>
</dbReference>
<dbReference type="InterPro" id="IPR020568">
    <property type="entry name" value="Ribosomal_Su5_D2-typ_SF"/>
</dbReference>
<dbReference type="InterPro" id="IPR000851">
    <property type="entry name" value="Ribosomal_uS5"/>
</dbReference>
<dbReference type="InterPro" id="IPR005712">
    <property type="entry name" value="Ribosomal_uS5_bac-type"/>
</dbReference>
<dbReference type="InterPro" id="IPR005324">
    <property type="entry name" value="Ribosomal_uS5_C"/>
</dbReference>
<dbReference type="InterPro" id="IPR013810">
    <property type="entry name" value="Ribosomal_uS5_N"/>
</dbReference>
<dbReference type="InterPro" id="IPR018192">
    <property type="entry name" value="Ribosomal_uS5_N_CS"/>
</dbReference>
<dbReference type="InterPro" id="IPR014721">
    <property type="entry name" value="Ribsml_uS5_D2-typ_fold_subgr"/>
</dbReference>
<dbReference type="NCBIfam" id="TIGR01021">
    <property type="entry name" value="rpsE_bact"/>
    <property type="match status" value="1"/>
</dbReference>
<dbReference type="PANTHER" id="PTHR48277">
    <property type="entry name" value="MITOCHONDRIAL RIBOSOMAL PROTEIN S5"/>
    <property type="match status" value="1"/>
</dbReference>
<dbReference type="PANTHER" id="PTHR48277:SF1">
    <property type="entry name" value="MITOCHONDRIAL RIBOSOMAL PROTEIN S5"/>
    <property type="match status" value="1"/>
</dbReference>
<dbReference type="Pfam" id="PF00333">
    <property type="entry name" value="Ribosomal_S5"/>
    <property type="match status" value="1"/>
</dbReference>
<dbReference type="Pfam" id="PF03719">
    <property type="entry name" value="Ribosomal_S5_C"/>
    <property type="match status" value="1"/>
</dbReference>
<dbReference type="SUPFAM" id="SSF54768">
    <property type="entry name" value="dsRNA-binding domain-like"/>
    <property type="match status" value="1"/>
</dbReference>
<dbReference type="SUPFAM" id="SSF54211">
    <property type="entry name" value="Ribosomal protein S5 domain 2-like"/>
    <property type="match status" value="1"/>
</dbReference>
<dbReference type="PROSITE" id="PS00585">
    <property type="entry name" value="RIBOSOMAL_S5"/>
    <property type="match status" value="1"/>
</dbReference>
<dbReference type="PROSITE" id="PS50881">
    <property type="entry name" value="S5_DSRBD"/>
    <property type="match status" value="1"/>
</dbReference>
<organism>
    <name type="scientific">Laribacter hongkongensis (strain HLHK9)</name>
    <dbReference type="NCBI Taxonomy" id="557598"/>
    <lineage>
        <taxon>Bacteria</taxon>
        <taxon>Pseudomonadati</taxon>
        <taxon>Pseudomonadota</taxon>
        <taxon>Betaproteobacteria</taxon>
        <taxon>Neisseriales</taxon>
        <taxon>Aquaspirillaceae</taxon>
        <taxon>Laribacter</taxon>
    </lineage>
</organism>
<reference key="1">
    <citation type="journal article" date="2009" name="PLoS Genet.">
        <title>The complete genome and proteome of Laribacter hongkongensis reveal potential mechanisms for adaptations to different temperatures and habitats.</title>
        <authorList>
            <person name="Woo P.C.Y."/>
            <person name="Lau S.K.P."/>
            <person name="Tse H."/>
            <person name="Teng J.L.L."/>
            <person name="Curreem S.O."/>
            <person name="Tsang A.K.L."/>
            <person name="Fan R.Y.Y."/>
            <person name="Wong G.K.M."/>
            <person name="Huang Y."/>
            <person name="Loman N.J."/>
            <person name="Snyder L.A.S."/>
            <person name="Cai J.J."/>
            <person name="Huang J.-D."/>
            <person name="Mak W."/>
            <person name="Pallen M.J."/>
            <person name="Lok S."/>
            <person name="Yuen K.-Y."/>
        </authorList>
    </citation>
    <scope>NUCLEOTIDE SEQUENCE [LARGE SCALE GENOMIC DNA]</scope>
    <source>
        <strain>HLHK9</strain>
    </source>
</reference>
<name>RS5_LARHH</name>
<sequence>MAKHDIEERGDGLTEKLIGVNRVTKVVKGGRIMAFSALTVVGDGDGGIGMGKGKSKEVPVAVQKAMDQARRSMVKIPLRNGTLQHAVIGKHGATTVFMQPAPEGSGVKAGGAMRQVFDAIGVHNVSAKVHGSTNPYNVVRATLNGLMKINTPADIAAKRGKTVAEILGAE</sequence>
<accession>C1DAT4</accession>
<protein>
    <recommendedName>
        <fullName evidence="1">Small ribosomal subunit protein uS5</fullName>
    </recommendedName>
    <alternativeName>
        <fullName evidence="2">30S ribosomal protein S5</fullName>
    </alternativeName>
</protein>
<feature type="chain" id="PRO_1000165452" description="Small ribosomal subunit protein uS5">
    <location>
        <begin position="1"/>
        <end position="170"/>
    </location>
</feature>
<feature type="domain" description="S5 DRBM" evidence="1">
    <location>
        <begin position="13"/>
        <end position="76"/>
    </location>
</feature>
<proteinExistence type="inferred from homology"/>
<comment type="function">
    <text evidence="1">With S4 and S12 plays an important role in translational accuracy.</text>
</comment>
<comment type="function">
    <text evidence="1">Located at the back of the 30S subunit body where it stabilizes the conformation of the head with respect to the body.</text>
</comment>
<comment type="subunit">
    <text evidence="1">Part of the 30S ribosomal subunit. Contacts proteins S4 and S8.</text>
</comment>
<comment type="domain">
    <text>The N-terminal domain interacts with the head of the 30S subunit; the C-terminal domain interacts with the body and contacts protein S4. The interaction surface between S4 and S5 is involved in control of translational fidelity.</text>
</comment>
<comment type="similarity">
    <text evidence="1">Belongs to the universal ribosomal protein uS5 family.</text>
</comment>
<gene>
    <name evidence="1" type="primary">rpsE</name>
    <name type="ordered locus">LHK_00270</name>
</gene>